<reference key="1">
    <citation type="submission" date="2008-10" db="EMBL/GenBank/DDBJ databases">
        <title>The complete genome sequence of Helicobacter pylori strain P12.</title>
        <authorList>
            <person name="Fischer W."/>
            <person name="Windhager L."/>
            <person name="Karnholz A."/>
            <person name="Zeiller M."/>
            <person name="Zimmer R."/>
            <person name="Haas R."/>
        </authorList>
    </citation>
    <scope>NUCLEOTIDE SEQUENCE [LARGE SCALE GENOMIC DNA]</scope>
    <source>
        <strain>P12</strain>
    </source>
</reference>
<proteinExistence type="inferred from homology"/>
<comment type="function">
    <text evidence="1">Catalyzes the synthesis of GMP from XMP.</text>
</comment>
<comment type="catalytic activity">
    <reaction evidence="1">
        <text>XMP + L-glutamine + ATP + H2O = GMP + L-glutamate + AMP + diphosphate + 2 H(+)</text>
        <dbReference type="Rhea" id="RHEA:11680"/>
        <dbReference type="ChEBI" id="CHEBI:15377"/>
        <dbReference type="ChEBI" id="CHEBI:15378"/>
        <dbReference type="ChEBI" id="CHEBI:29985"/>
        <dbReference type="ChEBI" id="CHEBI:30616"/>
        <dbReference type="ChEBI" id="CHEBI:33019"/>
        <dbReference type="ChEBI" id="CHEBI:57464"/>
        <dbReference type="ChEBI" id="CHEBI:58115"/>
        <dbReference type="ChEBI" id="CHEBI:58359"/>
        <dbReference type="ChEBI" id="CHEBI:456215"/>
        <dbReference type="EC" id="6.3.5.2"/>
    </reaction>
</comment>
<comment type="pathway">
    <text evidence="1">Purine metabolism; GMP biosynthesis; GMP from XMP (L-Gln route): step 1/1.</text>
</comment>
<comment type="subunit">
    <text evidence="1">Homodimer.</text>
</comment>
<dbReference type="EC" id="6.3.5.2" evidence="1"/>
<dbReference type="EMBL" id="CP001217">
    <property type="protein sequence ID" value="ACJ08163.1"/>
    <property type="molecule type" value="Genomic_DNA"/>
</dbReference>
<dbReference type="SMR" id="B6JMN5"/>
<dbReference type="MEROPS" id="C26.957"/>
<dbReference type="KEGG" id="hpp:HPP12_1011"/>
<dbReference type="HOGENOM" id="CLU_014340_0_5_7"/>
<dbReference type="UniPathway" id="UPA00189">
    <property type="reaction ID" value="UER00296"/>
</dbReference>
<dbReference type="Proteomes" id="UP000008198">
    <property type="component" value="Chromosome"/>
</dbReference>
<dbReference type="GO" id="GO:0005829">
    <property type="term" value="C:cytosol"/>
    <property type="evidence" value="ECO:0007669"/>
    <property type="project" value="TreeGrafter"/>
</dbReference>
<dbReference type="GO" id="GO:0005524">
    <property type="term" value="F:ATP binding"/>
    <property type="evidence" value="ECO:0007669"/>
    <property type="project" value="UniProtKB-UniRule"/>
</dbReference>
<dbReference type="GO" id="GO:0003921">
    <property type="term" value="F:GMP synthase activity"/>
    <property type="evidence" value="ECO:0007669"/>
    <property type="project" value="InterPro"/>
</dbReference>
<dbReference type="CDD" id="cd01742">
    <property type="entry name" value="GATase1_GMP_Synthase"/>
    <property type="match status" value="1"/>
</dbReference>
<dbReference type="CDD" id="cd01997">
    <property type="entry name" value="GMP_synthase_C"/>
    <property type="match status" value="1"/>
</dbReference>
<dbReference type="FunFam" id="3.30.300.10:FF:000002">
    <property type="entry name" value="GMP synthase [glutamine-hydrolyzing]"/>
    <property type="match status" value="1"/>
</dbReference>
<dbReference type="FunFam" id="3.40.50.620:FF:000001">
    <property type="entry name" value="GMP synthase [glutamine-hydrolyzing]"/>
    <property type="match status" value="1"/>
</dbReference>
<dbReference type="FunFam" id="3.40.50.880:FF:000001">
    <property type="entry name" value="GMP synthase [glutamine-hydrolyzing]"/>
    <property type="match status" value="1"/>
</dbReference>
<dbReference type="Gene3D" id="3.30.300.10">
    <property type="match status" value="1"/>
</dbReference>
<dbReference type="Gene3D" id="3.40.50.880">
    <property type="match status" value="1"/>
</dbReference>
<dbReference type="Gene3D" id="3.40.50.620">
    <property type="entry name" value="HUPs"/>
    <property type="match status" value="1"/>
</dbReference>
<dbReference type="HAMAP" id="MF_00344">
    <property type="entry name" value="GMP_synthase"/>
    <property type="match status" value="1"/>
</dbReference>
<dbReference type="InterPro" id="IPR029062">
    <property type="entry name" value="Class_I_gatase-like"/>
</dbReference>
<dbReference type="InterPro" id="IPR017926">
    <property type="entry name" value="GATASE"/>
</dbReference>
<dbReference type="InterPro" id="IPR001674">
    <property type="entry name" value="GMP_synth_C"/>
</dbReference>
<dbReference type="InterPro" id="IPR004739">
    <property type="entry name" value="GMP_synth_GATase"/>
</dbReference>
<dbReference type="InterPro" id="IPR022955">
    <property type="entry name" value="GMP_synthase"/>
</dbReference>
<dbReference type="InterPro" id="IPR025777">
    <property type="entry name" value="GMPS_ATP_PPase_dom"/>
</dbReference>
<dbReference type="InterPro" id="IPR022310">
    <property type="entry name" value="NAD/GMP_synthase"/>
</dbReference>
<dbReference type="InterPro" id="IPR014729">
    <property type="entry name" value="Rossmann-like_a/b/a_fold"/>
</dbReference>
<dbReference type="NCBIfam" id="TIGR00884">
    <property type="entry name" value="guaA_Cterm"/>
    <property type="match status" value="1"/>
</dbReference>
<dbReference type="NCBIfam" id="TIGR00888">
    <property type="entry name" value="guaA_Nterm"/>
    <property type="match status" value="1"/>
</dbReference>
<dbReference type="NCBIfam" id="NF000848">
    <property type="entry name" value="PRK00074.1"/>
    <property type="match status" value="1"/>
</dbReference>
<dbReference type="PANTHER" id="PTHR11922:SF2">
    <property type="entry name" value="GMP SYNTHASE [GLUTAMINE-HYDROLYZING]"/>
    <property type="match status" value="1"/>
</dbReference>
<dbReference type="PANTHER" id="PTHR11922">
    <property type="entry name" value="GMP SYNTHASE-RELATED"/>
    <property type="match status" value="1"/>
</dbReference>
<dbReference type="Pfam" id="PF00117">
    <property type="entry name" value="GATase"/>
    <property type="match status" value="1"/>
</dbReference>
<dbReference type="Pfam" id="PF00958">
    <property type="entry name" value="GMP_synt_C"/>
    <property type="match status" value="1"/>
</dbReference>
<dbReference type="Pfam" id="PF02540">
    <property type="entry name" value="NAD_synthase"/>
    <property type="match status" value="1"/>
</dbReference>
<dbReference type="PRINTS" id="PR00097">
    <property type="entry name" value="ANTSNTHASEII"/>
</dbReference>
<dbReference type="PRINTS" id="PR00096">
    <property type="entry name" value="GATASE"/>
</dbReference>
<dbReference type="SUPFAM" id="SSF52402">
    <property type="entry name" value="Adenine nucleotide alpha hydrolases-like"/>
    <property type="match status" value="1"/>
</dbReference>
<dbReference type="SUPFAM" id="SSF52317">
    <property type="entry name" value="Class I glutamine amidotransferase-like"/>
    <property type="match status" value="1"/>
</dbReference>
<dbReference type="SUPFAM" id="SSF54810">
    <property type="entry name" value="GMP synthetase C-terminal dimerisation domain"/>
    <property type="match status" value="1"/>
</dbReference>
<dbReference type="PROSITE" id="PS51273">
    <property type="entry name" value="GATASE_TYPE_1"/>
    <property type="match status" value="1"/>
</dbReference>
<dbReference type="PROSITE" id="PS51553">
    <property type="entry name" value="GMPS_ATP_PPASE"/>
    <property type="match status" value="1"/>
</dbReference>
<sequence length="508" mass="56723">MILVLDFGSQYTQLIARRLRESGIYTEIVPFFESIENIQKKAPKGLILSGGPASVYAKDAYKPNGKIFDLNVPILGICYGMQYLVDFFGGVVVGANEQEFGKAVLEITQDSVIFEGVKIKSLVWMSHMDKVIELPKGFTTLAKSPNSPHCAIENGKIFGLQFHPEVIQSEEGGKILENFALLVCGCEKTWGMQHFAQREIARLKEKIANAKVLCAVSGGVDSTVVATLLYRAIKDNLIAVFVDHGLLRKNEKERVQAMFKDLQIPLNTIDAKGIFLSKLKGVSEPELKRKIIGETFIEVFEKEAKKHHLKGKIEFLAQGTLYPDVIESVSVKGPSKVIKTHHNVGGLPEWMDFKLIEPLRELFKDEARLLGKELGVSQDFLMRHPFPGPGLAVRILGEVSESKIKRLQEADFIFIEELKKANLYDKVWQAFCVLLNVNSVGVMGDNRTYENAICLRAVNASDGMTASFSFLEHSFLEKVSNRITNEVSGINRVVYDITSKPPGTIEWE</sequence>
<accession>B6JMN5</accession>
<keyword id="KW-0067">ATP-binding</keyword>
<keyword id="KW-0315">Glutamine amidotransferase</keyword>
<keyword id="KW-0332">GMP biosynthesis</keyword>
<keyword id="KW-0436">Ligase</keyword>
<keyword id="KW-0547">Nucleotide-binding</keyword>
<keyword id="KW-0658">Purine biosynthesis</keyword>
<feature type="chain" id="PRO_1000120316" description="GMP synthase [glutamine-hydrolyzing]">
    <location>
        <begin position="1"/>
        <end position="508"/>
    </location>
</feature>
<feature type="domain" description="Glutamine amidotransferase type-1" evidence="1">
    <location>
        <begin position="1"/>
        <end position="189"/>
    </location>
</feature>
<feature type="domain" description="GMPS ATP-PPase" evidence="1">
    <location>
        <begin position="190"/>
        <end position="383"/>
    </location>
</feature>
<feature type="active site" description="Nucleophile" evidence="1">
    <location>
        <position position="78"/>
    </location>
</feature>
<feature type="active site" evidence="1">
    <location>
        <position position="163"/>
    </location>
</feature>
<feature type="active site" evidence="1">
    <location>
        <position position="165"/>
    </location>
</feature>
<feature type="binding site" evidence="1">
    <location>
        <begin position="217"/>
        <end position="223"/>
    </location>
    <ligand>
        <name>ATP</name>
        <dbReference type="ChEBI" id="CHEBI:30616"/>
    </ligand>
</feature>
<name>GUAA_HELP2</name>
<evidence type="ECO:0000255" key="1">
    <source>
        <dbReference type="HAMAP-Rule" id="MF_00344"/>
    </source>
</evidence>
<protein>
    <recommendedName>
        <fullName evidence="1">GMP synthase [glutamine-hydrolyzing]</fullName>
        <ecNumber evidence="1">6.3.5.2</ecNumber>
    </recommendedName>
    <alternativeName>
        <fullName evidence="1">GMP synthetase</fullName>
    </alternativeName>
    <alternativeName>
        <fullName evidence="1">Glutamine amidotransferase</fullName>
    </alternativeName>
</protein>
<gene>
    <name evidence="1" type="primary">guaA</name>
    <name type="ordered locus">HPP12_1011</name>
</gene>
<organism>
    <name type="scientific">Helicobacter pylori (strain P12)</name>
    <dbReference type="NCBI Taxonomy" id="570508"/>
    <lineage>
        <taxon>Bacteria</taxon>
        <taxon>Pseudomonadati</taxon>
        <taxon>Campylobacterota</taxon>
        <taxon>Epsilonproteobacteria</taxon>
        <taxon>Campylobacterales</taxon>
        <taxon>Helicobacteraceae</taxon>
        <taxon>Helicobacter</taxon>
    </lineage>
</organism>